<proteinExistence type="inferred from homology"/>
<comment type="function">
    <text evidence="1">Component of the dark-operative protochlorophyllide reductase (DPOR) that uses Mg-ATP and reduced ferredoxin to reduce ring D of protochlorophyllide (Pchlide) to form chlorophyllide a (Chlide). This reaction is light-independent. The L component serves as a unique electron donor to the NB-component of the complex, and binds Mg-ATP.</text>
</comment>
<comment type="catalytic activity">
    <reaction evidence="1">
        <text>chlorophyllide a + oxidized 2[4Fe-4S]-[ferredoxin] + 2 ADP + 2 phosphate = protochlorophyllide a + reduced 2[4Fe-4S]-[ferredoxin] + 2 ATP + 2 H2O</text>
        <dbReference type="Rhea" id="RHEA:28202"/>
        <dbReference type="Rhea" id="RHEA-COMP:10002"/>
        <dbReference type="Rhea" id="RHEA-COMP:10004"/>
        <dbReference type="ChEBI" id="CHEBI:15377"/>
        <dbReference type="ChEBI" id="CHEBI:30616"/>
        <dbReference type="ChEBI" id="CHEBI:33722"/>
        <dbReference type="ChEBI" id="CHEBI:33723"/>
        <dbReference type="ChEBI" id="CHEBI:43474"/>
        <dbReference type="ChEBI" id="CHEBI:83348"/>
        <dbReference type="ChEBI" id="CHEBI:83350"/>
        <dbReference type="ChEBI" id="CHEBI:456216"/>
        <dbReference type="EC" id="1.3.7.7"/>
    </reaction>
</comment>
<comment type="cofactor">
    <cofactor evidence="1">
        <name>[4Fe-4S] cluster</name>
        <dbReference type="ChEBI" id="CHEBI:49883"/>
    </cofactor>
    <text evidence="1">Binds 1 [4Fe-4S] cluster per dimer.</text>
</comment>
<comment type="pathway">
    <text evidence="1">Porphyrin-containing compound metabolism; chlorophyll biosynthesis (light-independent).</text>
</comment>
<comment type="subunit">
    <text evidence="1">Homodimer. Protochlorophyllide reductase is composed of three subunits; ChlL, ChlN and ChlB.</text>
</comment>
<comment type="similarity">
    <text evidence="1">Belongs to the NifH/BchL/ChlL family.</text>
</comment>
<reference key="1">
    <citation type="journal article" date="2007" name="PLoS Genet.">
        <title>Patterns and implications of gene gain and loss in the evolution of Prochlorococcus.</title>
        <authorList>
            <person name="Kettler G.C."/>
            <person name="Martiny A.C."/>
            <person name="Huang K."/>
            <person name="Zucker J."/>
            <person name="Coleman M.L."/>
            <person name="Rodrigue S."/>
            <person name="Chen F."/>
            <person name="Lapidus A."/>
            <person name="Ferriera S."/>
            <person name="Johnson J."/>
            <person name="Steglich C."/>
            <person name="Church G.M."/>
            <person name="Richardson P."/>
            <person name="Chisholm S.W."/>
        </authorList>
    </citation>
    <scope>NUCLEOTIDE SEQUENCE [LARGE SCALE GENOMIC DNA]</scope>
    <source>
        <strain>MIT 9303</strain>
    </source>
</reference>
<accession>A2C7T4</accession>
<dbReference type="EC" id="1.3.7.7" evidence="1"/>
<dbReference type="EMBL" id="CP000554">
    <property type="protein sequence ID" value="ABM77544.1"/>
    <property type="molecule type" value="Genomic_DNA"/>
</dbReference>
<dbReference type="RefSeq" id="WP_011825458.1">
    <property type="nucleotide sequence ID" value="NC_008820.1"/>
</dbReference>
<dbReference type="SMR" id="A2C7T4"/>
<dbReference type="STRING" id="59922.P9303_07931"/>
<dbReference type="KEGG" id="pmf:P9303_07931"/>
<dbReference type="HOGENOM" id="CLU_059373_2_0_3"/>
<dbReference type="BioCyc" id="PMAR59922:G1G80-719-MONOMER"/>
<dbReference type="UniPathway" id="UPA00670"/>
<dbReference type="Proteomes" id="UP000002274">
    <property type="component" value="Chromosome"/>
</dbReference>
<dbReference type="GO" id="GO:0051539">
    <property type="term" value="F:4 iron, 4 sulfur cluster binding"/>
    <property type="evidence" value="ECO:0007669"/>
    <property type="project" value="UniProtKB-UniRule"/>
</dbReference>
<dbReference type="GO" id="GO:0005524">
    <property type="term" value="F:ATP binding"/>
    <property type="evidence" value="ECO:0007669"/>
    <property type="project" value="UniProtKB-UniRule"/>
</dbReference>
<dbReference type="GO" id="GO:0046872">
    <property type="term" value="F:metal ion binding"/>
    <property type="evidence" value="ECO:0007669"/>
    <property type="project" value="UniProtKB-KW"/>
</dbReference>
<dbReference type="GO" id="GO:0016730">
    <property type="term" value="F:oxidoreductase activity, acting on iron-sulfur proteins as donors"/>
    <property type="evidence" value="ECO:0007669"/>
    <property type="project" value="InterPro"/>
</dbReference>
<dbReference type="GO" id="GO:0016636">
    <property type="term" value="F:oxidoreductase activity, acting on the CH-CH group of donors, iron-sulfur protein as acceptor"/>
    <property type="evidence" value="ECO:0007669"/>
    <property type="project" value="UniProtKB-UniRule"/>
</dbReference>
<dbReference type="GO" id="GO:0036068">
    <property type="term" value="P:light-independent chlorophyll biosynthetic process"/>
    <property type="evidence" value="ECO:0007669"/>
    <property type="project" value="UniProtKB-UniRule"/>
</dbReference>
<dbReference type="GO" id="GO:0019685">
    <property type="term" value="P:photosynthesis, dark reaction"/>
    <property type="evidence" value="ECO:0007669"/>
    <property type="project" value="InterPro"/>
</dbReference>
<dbReference type="CDD" id="cd02032">
    <property type="entry name" value="Bchl-like"/>
    <property type="match status" value="1"/>
</dbReference>
<dbReference type="Gene3D" id="3.40.50.300">
    <property type="entry name" value="P-loop containing nucleotide triphosphate hydrolases"/>
    <property type="match status" value="1"/>
</dbReference>
<dbReference type="HAMAP" id="MF_00355">
    <property type="entry name" value="ChlL_BchL"/>
    <property type="match status" value="1"/>
</dbReference>
<dbReference type="InterPro" id="IPR030655">
    <property type="entry name" value="NifH/chlL_CS"/>
</dbReference>
<dbReference type="InterPro" id="IPR000392">
    <property type="entry name" value="NifH/frxC"/>
</dbReference>
<dbReference type="InterPro" id="IPR027417">
    <property type="entry name" value="P-loop_NTPase"/>
</dbReference>
<dbReference type="InterPro" id="IPR005971">
    <property type="entry name" value="Protochlorophyllide_ATP-bd"/>
</dbReference>
<dbReference type="NCBIfam" id="TIGR01281">
    <property type="entry name" value="DPOR_bchL"/>
    <property type="match status" value="1"/>
</dbReference>
<dbReference type="PANTHER" id="PTHR42864">
    <property type="entry name" value="LIGHT-INDEPENDENT PROTOCHLOROPHYLLIDE REDUCTASE IRON-SULFUR ATP-BINDING PROTEIN"/>
    <property type="match status" value="1"/>
</dbReference>
<dbReference type="PANTHER" id="PTHR42864:SF2">
    <property type="entry name" value="LIGHT-INDEPENDENT PROTOCHLOROPHYLLIDE REDUCTASE IRON-SULFUR ATP-BINDING PROTEIN"/>
    <property type="match status" value="1"/>
</dbReference>
<dbReference type="Pfam" id="PF00142">
    <property type="entry name" value="Fer4_NifH"/>
    <property type="match status" value="1"/>
</dbReference>
<dbReference type="PIRSF" id="PIRSF000363">
    <property type="entry name" value="Nitrogenase_iron"/>
    <property type="match status" value="1"/>
</dbReference>
<dbReference type="PRINTS" id="PR00091">
    <property type="entry name" value="NITROGNASEII"/>
</dbReference>
<dbReference type="SUPFAM" id="SSF52540">
    <property type="entry name" value="P-loop containing nucleoside triphosphate hydrolases"/>
    <property type="match status" value="1"/>
</dbReference>
<dbReference type="PROSITE" id="PS00746">
    <property type="entry name" value="NIFH_FRXC_1"/>
    <property type="match status" value="1"/>
</dbReference>
<dbReference type="PROSITE" id="PS00692">
    <property type="entry name" value="NIFH_FRXC_2"/>
    <property type="match status" value="1"/>
</dbReference>
<dbReference type="PROSITE" id="PS51026">
    <property type="entry name" value="NIFH_FRXC_3"/>
    <property type="match status" value="1"/>
</dbReference>
<gene>
    <name evidence="1" type="primary">chlL</name>
    <name type="ordered locus">P9303_07931</name>
</gene>
<name>CHLL_PROM3</name>
<evidence type="ECO:0000255" key="1">
    <source>
        <dbReference type="HAMAP-Rule" id="MF_00355"/>
    </source>
</evidence>
<keyword id="KW-0004">4Fe-4S</keyword>
<keyword id="KW-0067">ATP-binding</keyword>
<keyword id="KW-0149">Chlorophyll biosynthesis</keyword>
<keyword id="KW-0408">Iron</keyword>
<keyword id="KW-0411">Iron-sulfur</keyword>
<keyword id="KW-0460">Magnesium</keyword>
<keyword id="KW-0479">Metal-binding</keyword>
<keyword id="KW-0547">Nucleotide-binding</keyword>
<keyword id="KW-0560">Oxidoreductase</keyword>
<keyword id="KW-0602">Photosynthesis</keyword>
<organism>
    <name type="scientific">Prochlorococcus marinus (strain MIT 9303)</name>
    <dbReference type="NCBI Taxonomy" id="59922"/>
    <lineage>
        <taxon>Bacteria</taxon>
        <taxon>Bacillati</taxon>
        <taxon>Cyanobacteriota</taxon>
        <taxon>Cyanophyceae</taxon>
        <taxon>Synechococcales</taxon>
        <taxon>Prochlorococcaceae</taxon>
        <taxon>Prochlorococcus</taxon>
    </lineage>
</organism>
<protein>
    <recommendedName>
        <fullName evidence="1">Light-independent protochlorophyllide reductase iron-sulfur ATP-binding protein</fullName>
        <shortName evidence="1">DPOR subunit L</shortName>
        <shortName evidence="1">LI-POR subunit L</shortName>
        <ecNumber evidence="1">1.3.7.7</ecNumber>
    </recommendedName>
</protein>
<feature type="chain" id="PRO_0000324061" description="Light-independent protochlorophyllide reductase iron-sulfur ATP-binding protein">
    <location>
        <begin position="1"/>
        <end position="296"/>
    </location>
</feature>
<feature type="binding site" evidence="1">
    <location>
        <begin position="39"/>
        <end position="44"/>
    </location>
    <ligand>
        <name>ATP</name>
        <dbReference type="ChEBI" id="CHEBI:30616"/>
    </ligand>
</feature>
<feature type="binding site" evidence="1">
    <location>
        <position position="43"/>
    </location>
    <ligand>
        <name>Mg(2+)</name>
        <dbReference type="ChEBI" id="CHEBI:18420"/>
    </ligand>
</feature>
<feature type="binding site" evidence="1">
    <location>
        <position position="68"/>
    </location>
    <ligand>
        <name>ATP</name>
        <dbReference type="ChEBI" id="CHEBI:30616"/>
    </ligand>
</feature>
<feature type="binding site" evidence="1">
    <location>
        <position position="124"/>
    </location>
    <ligand>
        <name>[4Fe-4S] cluster</name>
        <dbReference type="ChEBI" id="CHEBI:49883"/>
        <note>ligand shared between dimeric partners</note>
    </ligand>
</feature>
<feature type="binding site" evidence="1">
    <location>
        <position position="158"/>
    </location>
    <ligand>
        <name>[4Fe-4S] cluster</name>
        <dbReference type="ChEBI" id="CHEBI:49883"/>
        <note>ligand shared between dimeric partners</note>
    </ligand>
</feature>
<feature type="binding site" evidence="1">
    <location>
        <begin position="209"/>
        <end position="210"/>
    </location>
    <ligand>
        <name>ATP</name>
        <dbReference type="ChEBI" id="CHEBI:30616"/>
    </ligand>
</feature>
<sequence length="296" mass="32322">MTTTLTRPADGEGSVQVQQDASVRIQEGALVIAVYGKGGIGKSTTSSNLSAAFSKLGKRVLQIGCDPKHDSTFTLTHRMVPTVIDILEEVDFHSEELRPDDFMFEGFNGVKCVESGGPPAGTGCGGYVTGQTVKLLKEHHLLEDTDVVIFDVLGDVVCGGFAAPLQHANYCLIVTANDFDSIFAMNRIVAAINAKAKNYKVRLGGVIANRSADLDQIEKFNKETGLKTMAHFKNVDAIRRSRLKKCTIFEMDSSEEGVLECQNEYLALAQKMIDKVEPLEAEPLKDREIFDLLGFD</sequence>